<comment type="subunit">
    <text evidence="1">May be part of a SEM1-containing complex.</text>
</comment>
<comment type="alternative products">
    <event type="alternative splicing"/>
    <isoform>
        <id>Q8CBY3-1</id>
        <name>1</name>
        <sequence type="displayed"/>
    </isoform>
    <isoform>
        <id>Q8CBY3-3</id>
        <name>3</name>
        <sequence type="described" ref="VSP_028464 VSP_028465"/>
    </isoform>
</comment>
<proteinExistence type="evidence at protein level"/>
<evidence type="ECO:0000250" key="1">
    <source>
        <dbReference type="UniProtKB" id="Q96PV6"/>
    </source>
</evidence>
<evidence type="ECO:0000255" key="2">
    <source>
        <dbReference type="PROSITE-ProRule" id="PRU01185"/>
    </source>
</evidence>
<evidence type="ECO:0000256" key="3">
    <source>
        <dbReference type="SAM" id="MobiDB-lite"/>
    </source>
</evidence>
<evidence type="ECO:0000303" key="4">
    <source>
    </source>
</evidence>
<evidence type="ECO:0000305" key="5"/>
<name>LENG8_MOUSE</name>
<dbReference type="EMBL" id="AK034310">
    <property type="protein sequence ID" value="BAC28671.1"/>
    <property type="molecule type" value="mRNA"/>
</dbReference>
<dbReference type="EMBL" id="AK085304">
    <property type="protein sequence ID" value="BAC39415.1"/>
    <property type="molecule type" value="mRNA"/>
</dbReference>
<dbReference type="EMBL" id="AK170629">
    <property type="protein sequence ID" value="BAE41922.1"/>
    <property type="molecule type" value="mRNA"/>
</dbReference>
<dbReference type="EMBL" id="BC042658">
    <property type="protein sequence ID" value="AAH42658.1"/>
    <property type="molecule type" value="mRNA"/>
</dbReference>
<dbReference type="EMBL" id="BC066768">
    <property type="protein sequence ID" value="AAH66768.1"/>
    <property type="molecule type" value="mRNA"/>
</dbReference>
<dbReference type="CCDS" id="CCDS20731.1">
    <molecule id="Q8CBY3-1"/>
</dbReference>
<dbReference type="RefSeq" id="NP_001408650.1">
    <molecule id="Q8CBY3-1"/>
    <property type="nucleotide sequence ID" value="NM_001421721.1"/>
</dbReference>
<dbReference type="RefSeq" id="NP_001408651.1">
    <molecule id="Q8CBY3-1"/>
    <property type="nucleotide sequence ID" value="NM_001421722.1"/>
</dbReference>
<dbReference type="RefSeq" id="NP_001408657.1">
    <molecule id="Q8CBY3-3"/>
    <property type="nucleotide sequence ID" value="NM_001421728.1"/>
</dbReference>
<dbReference type="RefSeq" id="NP_001408658.1">
    <molecule id="Q8CBY3-3"/>
    <property type="nucleotide sequence ID" value="NM_001421729.1"/>
</dbReference>
<dbReference type="RefSeq" id="NP_766324.1">
    <molecule id="Q8CBY3-1"/>
    <property type="nucleotide sequence ID" value="NM_172736.4"/>
</dbReference>
<dbReference type="SMR" id="Q8CBY3"/>
<dbReference type="BioGRID" id="231296">
    <property type="interactions" value="5"/>
</dbReference>
<dbReference type="FunCoup" id="Q8CBY3">
    <property type="interactions" value="3490"/>
</dbReference>
<dbReference type="STRING" id="10090.ENSMUSP00000046465"/>
<dbReference type="GlyGen" id="Q8CBY3">
    <property type="glycosylation" value="5 sites, 1 O-linked glycan (5 sites)"/>
</dbReference>
<dbReference type="iPTMnet" id="Q8CBY3"/>
<dbReference type="PhosphoSitePlus" id="Q8CBY3"/>
<dbReference type="jPOST" id="Q8CBY3"/>
<dbReference type="PaxDb" id="10090-ENSMUSP00000046465"/>
<dbReference type="ProteomicsDB" id="286184">
    <molecule id="Q8CBY3-1"/>
</dbReference>
<dbReference type="ProteomicsDB" id="286185">
    <molecule id="Q8CBY3-3"/>
</dbReference>
<dbReference type="Pumba" id="Q8CBY3"/>
<dbReference type="Antibodypedia" id="46360">
    <property type="antibodies" value="52 antibodies from 18 providers"/>
</dbReference>
<dbReference type="DNASU" id="232798"/>
<dbReference type="Ensembl" id="ENSMUST00000037472.13">
    <molecule id="Q8CBY3-1"/>
    <property type="protein sequence ID" value="ENSMUSP00000046465.7"/>
    <property type="gene ID" value="ENSMUSG00000035545.14"/>
</dbReference>
<dbReference type="Ensembl" id="ENSMUST00000117274.8">
    <molecule id="Q8CBY3-3"/>
    <property type="protein sequence ID" value="ENSMUSP00000113223.2"/>
    <property type="gene ID" value="ENSMUSG00000035545.14"/>
</dbReference>
<dbReference type="GeneID" id="232798"/>
<dbReference type="KEGG" id="mmu:232798"/>
<dbReference type="UCSC" id="uc009exb.1">
    <molecule id="Q8CBY3-3"/>
    <property type="organism name" value="mouse"/>
</dbReference>
<dbReference type="UCSC" id="uc009exc.1">
    <molecule id="Q8CBY3-1"/>
    <property type="organism name" value="mouse"/>
</dbReference>
<dbReference type="AGR" id="MGI:2142195"/>
<dbReference type="CTD" id="114823"/>
<dbReference type="MGI" id="MGI:2142195">
    <property type="gene designation" value="Leng8"/>
</dbReference>
<dbReference type="VEuPathDB" id="HostDB:ENSMUSG00000035545"/>
<dbReference type="eggNOG" id="KOG1861">
    <property type="taxonomic scope" value="Eukaryota"/>
</dbReference>
<dbReference type="GeneTree" id="ENSGT00390000008006"/>
<dbReference type="HOGENOM" id="CLU_1980923_0_0_1"/>
<dbReference type="InParanoid" id="Q8CBY3"/>
<dbReference type="OrthoDB" id="199574at2759"/>
<dbReference type="TreeFam" id="TF312927"/>
<dbReference type="BioGRID-ORCS" id="232798">
    <property type="hits" value="13 hits in 64 CRISPR screens"/>
</dbReference>
<dbReference type="ChiTaRS" id="Leng8">
    <property type="organism name" value="mouse"/>
</dbReference>
<dbReference type="PRO" id="PR:Q8CBY3"/>
<dbReference type="Proteomes" id="UP000000589">
    <property type="component" value="Chromosome 7"/>
</dbReference>
<dbReference type="RNAct" id="Q8CBY3">
    <property type="molecule type" value="protein"/>
</dbReference>
<dbReference type="Bgee" id="ENSMUSG00000035545">
    <property type="expression patterns" value="Expressed in retinal neural layer and 244 other cell types or tissues"/>
</dbReference>
<dbReference type="ExpressionAtlas" id="Q8CBY3">
    <property type="expression patterns" value="baseline and differential"/>
</dbReference>
<dbReference type="FunFam" id="1.25.40.990:FF:000002">
    <property type="entry name" value="Leukocyte receptor cluster member 8 homolog"/>
    <property type="match status" value="1"/>
</dbReference>
<dbReference type="Gene3D" id="1.25.40.990">
    <property type="match status" value="1"/>
</dbReference>
<dbReference type="InterPro" id="IPR000717">
    <property type="entry name" value="PCI_dom"/>
</dbReference>
<dbReference type="InterPro" id="IPR045107">
    <property type="entry name" value="SAC3/GANP/THP3"/>
</dbReference>
<dbReference type="InterPro" id="IPR005062">
    <property type="entry name" value="SAC3/GANP/THP3_conserved"/>
</dbReference>
<dbReference type="PANTHER" id="PTHR12436">
    <property type="entry name" value="80 KDA MCM3-ASSOCIATED PROTEIN"/>
    <property type="match status" value="1"/>
</dbReference>
<dbReference type="PANTHER" id="PTHR12436:SF4">
    <property type="entry name" value="LEUKOCYTE RECEPTOR CLUSTER MEMBER 8"/>
    <property type="match status" value="1"/>
</dbReference>
<dbReference type="Pfam" id="PF03399">
    <property type="entry name" value="SAC3_GANP"/>
    <property type="match status" value="1"/>
</dbReference>
<dbReference type="PROSITE" id="PS50250">
    <property type="entry name" value="PCI"/>
    <property type="match status" value="1"/>
</dbReference>
<protein>
    <recommendedName>
        <fullName>Leukocyte receptor cluster member 8 homolog</fullName>
    </recommendedName>
</protein>
<sequence>MAANVGDQRAADWSSQYSMVTGNSRENGMETPMHENPEWEKARQALASISKAGATSSSKASSSGPVASAQYVSQAEASALQQQQQQYYQWYQQYNYAYPYSYYYPMSMYQSYGSPSQYGMASSYGSATAQQPSAPQHQGTLNQPPVPGMDESMAYQASPQQLPAAQPPQPSNSQHGTHSLSNGPQPGTAPSTQHSQAGAPTGQAYGPHSYSEPAKPKKGQQLWTRMKPAPGTGGLKFNIQKRPFAVTSQSFSSNSEGQHSSFGPQPNSENTQNRSGPSGRGNLSGKPDDWPQDMKEYVERCFTACESEEDKDRTEKLLKEVLQARLQDGSAYTIDWSREPLPGLTREPVAESPKKKRWEAPSSLHPSRGAGSVTRGGGAQSQRGTPGAGGAGRARGSSFTKFGNRNVFMKDNSSSSSTDSRSRSSSRSPTRHFRRSDSHSDSDSSYSGNECHPVGRRNPPPKGRGGRGAHMDRGRGRAQRGKRHDLAPTKRSRKKMAALECEDPERELKKQKRAARFQHGHSRRLRLEPLVLQMSNLESSGADPDWQELQIVGTCPDITKHYLRLTCAPDPSTVRPVAVLKKSLCMVKSHWKEKQDYAFACEQMKSIRQDLTVQGIRTEFTVEVYETHARIALEKGDHEEFNQCQTQLKSLYAENLAGNVGEFTAYRILYYIFTKNSGDITTELAYLTREMKADPCVAHALALRAAWALGNYHRFFRLYCHAPCMSGYLVDKFADRERKAALKAMIKTYVALHSAAFCAVALPRPLRILVSLQLLCWSPLPVPCS</sequence>
<reference key="1">
    <citation type="journal article" date="2005" name="Science">
        <title>The transcriptional landscape of the mammalian genome.</title>
        <authorList>
            <person name="Carninci P."/>
            <person name="Kasukawa T."/>
            <person name="Katayama S."/>
            <person name="Gough J."/>
            <person name="Frith M.C."/>
            <person name="Maeda N."/>
            <person name="Oyama R."/>
            <person name="Ravasi T."/>
            <person name="Lenhard B."/>
            <person name="Wells C."/>
            <person name="Kodzius R."/>
            <person name="Shimokawa K."/>
            <person name="Bajic V.B."/>
            <person name="Brenner S.E."/>
            <person name="Batalov S."/>
            <person name="Forrest A.R."/>
            <person name="Zavolan M."/>
            <person name="Davis M.J."/>
            <person name="Wilming L.G."/>
            <person name="Aidinis V."/>
            <person name="Allen J.E."/>
            <person name="Ambesi-Impiombato A."/>
            <person name="Apweiler R."/>
            <person name="Aturaliya R.N."/>
            <person name="Bailey T.L."/>
            <person name="Bansal M."/>
            <person name="Baxter L."/>
            <person name="Beisel K.W."/>
            <person name="Bersano T."/>
            <person name="Bono H."/>
            <person name="Chalk A.M."/>
            <person name="Chiu K.P."/>
            <person name="Choudhary V."/>
            <person name="Christoffels A."/>
            <person name="Clutterbuck D.R."/>
            <person name="Crowe M.L."/>
            <person name="Dalla E."/>
            <person name="Dalrymple B.P."/>
            <person name="de Bono B."/>
            <person name="Della Gatta G."/>
            <person name="di Bernardo D."/>
            <person name="Down T."/>
            <person name="Engstrom P."/>
            <person name="Fagiolini M."/>
            <person name="Faulkner G."/>
            <person name="Fletcher C.F."/>
            <person name="Fukushima T."/>
            <person name="Furuno M."/>
            <person name="Futaki S."/>
            <person name="Gariboldi M."/>
            <person name="Georgii-Hemming P."/>
            <person name="Gingeras T.R."/>
            <person name="Gojobori T."/>
            <person name="Green R.E."/>
            <person name="Gustincich S."/>
            <person name="Harbers M."/>
            <person name="Hayashi Y."/>
            <person name="Hensch T.K."/>
            <person name="Hirokawa N."/>
            <person name="Hill D."/>
            <person name="Huminiecki L."/>
            <person name="Iacono M."/>
            <person name="Ikeo K."/>
            <person name="Iwama A."/>
            <person name="Ishikawa T."/>
            <person name="Jakt M."/>
            <person name="Kanapin A."/>
            <person name="Katoh M."/>
            <person name="Kawasawa Y."/>
            <person name="Kelso J."/>
            <person name="Kitamura H."/>
            <person name="Kitano H."/>
            <person name="Kollias G."/>
            <person name="Krishnan S.P."/>
            <person name="Kruger A."/>
            <person name="Kummerfeld S.K."/>
            <person name="Kurochkin I.V."/>
            <person name="Lareau L.F."/>
            <person name="Lazarevic D."/>
            <person name="Lipovich L."/>
            <person name="Liu J."/>
            <person name="Liuni S."/>
            <person name="McWilliam S."/>
            <person name="Madan Babu M."/>
            <person name="Madera M."/>
            <person name="Marchionni L."/>
            <person name="Matsuda H."/>
            <person name="Matsuzawa S."/>
            <person name="Miki H."/>
            <person name="Mignone F."/>
            <person name="Miyake S."/>
            <person name="Morris K."/>
            <person name="Mottagui-Tabar S."/>
            <person name="Mulder N."/>
            <person name="Nakano N."/>
            <person name="Nakauchi H."/>
            <person name="Ng P."/>
            <person name="Nilsson R."/>
            <person name="Nishiguchi S."/>
            <person name="Nishikawa S."/>
            <person name="Nori F."/>
            <person name="Ohara O."/>
            <person name="Okazaki Y."/>
            <person name="Orlando V."/>
            <person name="Pang K.C."/>
            <person name="Pavan W.J."/>
            <person name="Pavesi G."/>
            <person name="Pesole G."/>
            <person name="Petrovsky N."/>
            <person name="Piazza S."/>
            <person name="Reed J."/>
            <person name="Reid J.F."/>
            <person name="Ring B.Z."/>
            <person name="Ringwald M."/>
            <person name="Rost B."/>
            <person name="Ruan Y."/>
            <person name="Salzberg S.L."/>
            <person name="Sandelin A."/>
            <person name="Schneider C."/>
            <person name="Schoenbach C."/>
            <person name="Sekiguchi K."/>
            <person name="Semple C.A."/>
            <person name="Seno S."/>
            <person name="Sessa L."/>
            <person name="Sheng Y."/>
            <person name="Shibata Y."/>
            <person name="Shimada H."/>
            <person name="Shimada K."/>
            <person name="Silva D."/>
            <person name="Sinclair B."/>
            <person name="Sperling S."/>
            <person name="Stupka E."/>
            <person name="Sugiura K."/>
            <person name="Sultana R."/>
            <person name="Takenaka Y."/>
            <person name="Taki K."/>
            <person name="Tammoja K."/>
            <person name="Tan S.L."/>
            <person name="Tang S."/>
            <person name="Taylor M.S."/>
            <person name="Tegner J."/>
            <person name="Teichmann S.A."/>
            <person name="Ueda H.R."/>
            <person name="van Nimwegen E."/>
            <person name="Verardo R."/>
            <person name="Wei C.L."/>
            <person name="Yagi K."/>
            <person name="Yamanishi H."/>
            <person name="Zabarovsky E."/>
            <person name="Zhu S."/>
            <person name="Zimmer A."/>
            <person name="Hide W."/>
            <person name="Bult C."/>
            <person name="Grimmond S.M."/>
            <person name="Teasdale R.D."/>
            <person name="Liu E.T."/>
            <person name="Brusic V."/>
            <person name="Quackenbush J."/>
            <person name="Wahlestedt C."/>
            <person name="Mattick J.S."/>
            <person name="Hume D.A."/>
            <person name="Kai C."/>
            <person name="Sasaki D."/>
            <person name="Tomaru Y."/>
            <person name="Fukuda S."/>
            <person name="Kanamori-Katayama M."/>
            <person name="Suzuki M."/>
            <person name="Aoki J."/>
            <person name="Arakawa T."/>
            <person name="Iida J."/>
            <person name="Imamura K."/>
            <person name="Itoh M."/>
            <person name="Kato T."/>
            <person name="Kawaji H."/>
            <person name="Kawagashira N."/>
            <person name="Kawashima T."/>
            <person name="Kojima M."/>
            <person name="Kondo S."/>
            <person name="Konno H."/>
            <person name="Nakano K."/>
            <person name="Ninomiya N."/>
            <person name="Nishio T."/>
            <person name="Okada M."/>
            <person name="Plessy C."/>
            <person name="Shibata K."/>
            <person name="Shiraki T."/>
            <person name="Suzuki S."/>
            <person name="Tagami M."/>
            <person name="Waki K."/>
            <person name="Watahiki A."/>
            <person name="Okamura-Oho Y."/>
            <person name="Suzuki H."/>
            <person name="Kawai J."/>
            <person name="Hayashizaki Y."/>
        </authorList>
    </citation>
    <scope>NUCLEOTIDE SEQUENCE [LARGE SCALE MRNA] (ISOFORMS 1 AND 3)</scope>
    <source>
        <strain>C57BL/6J</strain>
        <strain>NOD</strain>
        <tissue>Diencephalon</tissue>
        <tissue>Kidney</tissue>
    </source>
</reference>
<reference key="2">
    <citation type="journal article" date="2004" name="Genome Res.">
        <title>The status, quality, and expansion of the NIH full-length cDNA project: the Mammalian Gene Collection (MGC).</title>
        <authorList>
            <consortium name="The MGC Project Team"/>
        </authorList>
    </citation>
    <scope>NUCLEOTIDE SEQUENCE [LARGE SCALE MRNA] (ISOFORM 1)</scope>
    <source>
        <strain>C57BL/6J</strain>
        <tissue>Brain</tissue>
        <tissue>Eye</tissue>
    </source>
</reference>
<reference key="3">
    <citation type="submission" date="2009-01" db="UniProtKB">
        <authorList>
            <person name="Lubec G."/>
            <person name="Sunyer B."/>
            <person name="Chen W.-Q."/>
        </authorList>
    </citation>
    <scope>PROTEIN SEQUENCE OF 44-59</scope>
    <scope>IDENTIFICATION BY MASS SPECTROMETRY</scope>
    <source>
        <strain>OF1</strain>
        <tissue>Hippocampus</tissue>
    </source>
</reference>
<organism>
    <name type="scientific">Mus musculus</name>
    <name type="common">Mouse</name>
    <dbReference type="NCBI Taxonomy" id="10090"/>
    <lineage>
        <taxon>Eukaryota</taxon>
        <taxon>Metazoa</taxon>
        <taxon>Chordata</taxon>
        <taxon>Craniata</taxon>
        <taxon>Vertebrata</taxon>
        <taxon>Euteleostomi</taxon>
        <taxon>Mammalia</taxon>
        <taxon>Eutheria</taxon>
        <taxon>Euarchontoglires</taxon>
        <taxon>Glires</taxon>
        <taxon>Rodentia</taxon>
        <taxon>Myomorpha</taxon>
        <taxon>Muroidea</taxon>
        <taxon>Muridae</taxon>
        <taxon>Murinae</taxon>
        <taxon>Mus</taxon>
        <taxon>Mus</taxon>
    </lineage>
</organism>
<gene>
    <name type="primary">Leng8</name>
</gene>
<feature type="initiator methionine" description="Removed" evidence="1">
    <location>
        <position position="1"/>
    </location>
</feature>
<feature type="chain" id="PRO_0000306392" description="Leukocyte receptor cluster member 8 homolog">
    <location>
        <begin position="2"/>
        <end position="785"/>
    </location>
</feature>
<feature type="domain" description="PCI" evidence="2">
    <location>
        <begin position="637"/>
        <end position="785"/>
    </location>
</feature>
<feature type="region of interest" description="Disordered" evidence="3">
    <location>
        <begin position="1"/>
        <end position="64"/>
    </location>
</feature>
<feature type="region of interest" description="Disordered" evidence="3">
    <location>
        <begin position="119"/>
        <end position="292"/>
    </location>
</feature>
<feature type="region of interest" description="Disordered" evidence="3">
    <location>
        <begin position="336"/>
        <end position="507"/>
    </location>
</feature>
<feature type="compositionally biased region" description="Polar residues" evidence="3">
    <location>
        <begin position="13"/>
        <end position="26"/>
    </location>
</feature>
<feature type="compositionally biased region" description="Basic and acidic residues" evidence="3">
    <location>
        <begin position="32"/>
        <end position="43"/>
    </location>
</feature>
<feature type="compositionally biased region" description="Low complexity" evidence="3">
    <location>
        <begin position="47"/>
        <end position="64"/>
    </location>
</feature>
<feature type="compositionally biased region" description="Polar residues" evidence="3">
    <location>
        <begin position="119"/>
        <end position="143"/>
    </location>
</feature>
<feature type="compositionally biased region" description="Polar residues" evidence="3">
    <location>
        <begin position="175"/>
        <end position="198"/>
    </location>
</feature>
<feature type="compositionally biased region" description="Polar residues" evidence="3">
    <location>
        <begin position="246"/>
        <end position="276"/>
    </location>
</feature>
<feature type="compositionally biased region" description="Low complexity" evidence="3">
    <location>
        <begin position="413"/>
        <end position="428"/>
    </location>
</feature>
<feature type="modified residue" description="N-acetylalanine" evidence="1">
    <location>
        <position position="2"/>
    </location>
</feature>
<feature type="modified residue" description="Phosphoserine" evidence="1">
    <location>
        <position position="352"/>
    </location>
</feature>
<feature type="splice variant" id="VSP_028464" description="In isoform 3." evidence="4">
    <original>SMYQSYGSPSQYGMASSYGS</original>
    <variation>VRTWLQGGSLLSGWANGWLG</variation>
    <location>
        <begin position="107"/>
        <end position="126"/>
    </location>
</feature>
<feature type="splice variant" id="VSP_028465" description="In isoform 3." evidence="4">
    <location>
        <begin position="127"/>
        <end position="785"/>
    </location>
</feature>
<feature type="sequence conflict" description="In Ref. 1; BAE41922." evidence="5" ref="1">
    <original>S</original>
    <variation>P</variation>
    <location>
        <position position="754"/>
    </location>
</feature>
<accession>Q8CBY3</accession>
<accession>Q3TCN4</accession>
<accession>Q8C3P0</accession>
<accession>Q8CGB8</accession>
<keyword id="KW-0007">Acetylation</keyword>
<keyword id="KW-0025">Alternative splicing</keyword>
<keyword id="KW-0903">Direct protein sequencing</keyword>
<keyword id="KW-0597">Phosphoprotein</keyword>
<keyword id="KW-1185">Reference proteome</keyword>